<comment type="function">
    <text evidence="3 4 10">Phosphorylates a large number of substrates in the cytoplasm and the nucleus (By similarity). Phosphorylates CDC25B, ABL1, NFKB1, CLDN3, PSMC5/RPT6, PJA2, RYR2, RORA, SOX9 and VASP (By similarity). Regulates the abundance of compartmentalized pools of its regulatory subunits through phosphorylation of PJA2 which binds and ubiquitinates these subunits, leading to their subsequent proteolysis. RORA is activated by phosphorylation. Required for glucose-mediated adipogenic differentiation increase and osteogenic differentiation inhibition from osteoblasts (By similarity). Involved in chondrogenesis by mediating phosphorylation of SOX9 (By similarity). Involved in the regulation of platelets in response to thrombin and collagen; maintains circulating platelets in a resting state by phosphorylating proteins in numerous platelet inhibitory pathways when in complex with NF-kappa-B (NFKB1 and NFKB2) and I-kappa-B-alpha (NFKBIA), but thrombin and collagen disrupt these complexes and free active PRKACA stimulates platelets and leads to platelet aggregation by phosphorylating VASP. RYR2 channel activity is potentiated by phosphorylation in presence of luminal Ca(2+), leading to reduced amplitude and increased frequency of store overload-induced Ca(2+) release (SOICR) characterized by an increased rate of Ca(2+) release and propagation velocity of spontaneous Ca(2+) waves, despite reduced wave amplitude and resting cytosolic Ca(2+). PSMC5/RPT6 activation by phosphorylation stimulates proteasome. Negatively regulates tight junctions (TJs) in ovarian cancer cells via CLDN3 phosphorylation. NFKB1 phosphorylation promotes NF-kappa-B p50-p50 DNA binding. Required for phosphorylation of GLI transcription factors which inhibits them and prevents transcriptional activation of Hedgehog signaling pathway target genes (By similarity). GLI transcription factor phosphorylation is inhibited by interaction of PRKACA with SMO which sequesters PRKACA at the cell membrane (By similarity). Involved in embryonic development by down-regulating the Hedgehog (Hh) signaling pathway that determines embryo pattern formation and morphogenesis most probably through the regulation of OFD1 in ciliogenesis (By similarity). Prevents meiosis resumption in prophase-arrested oocytes via CDC25B inactivation by phosphorylation (By similarity). May also regulate rapid eye movement (REM) sleep in the pedunculopontine tegmental (PPT) (PubMed:20844122). Phosphorylates APOBEC3G and AICDA. Phosphorylates HSF1; this phosphorylation promotes HSF1 nuclear localization and transcriptional activity upon heat shock (By similarity). Acts as a negative regulator of mTORC1 by mediating phosphorylation of RPTOR (By similarity).</text>
</comment>
<comment type="catalytic activity">
    <reaction>
        <text>L-seryl-[protein] + ATP = O-phospho-L-seryl-[protein] + ADP + H(+)</text>
        <dbReference type="Rhea" id="RHEA:17989"/>
        <dbReference type="Rhea" id="RHEA-COMP:9863"/>
        <dbReference type="Rhea" id="RHEA-COMP:11604"/>
        <dbReference type="ChEBI" id="CHEBI:15378"/>
        <dbReference type="ChEBI" id="CHEBI:29999"/>
        <dbReference type="ChEBI" id="CHEBI:30616"/>
        <dbReference type="ChEBI" id="CHEBI:83421"/>
        <dbReference type="ChEBI" id="CHEBI:456216"/>
        <dbReference type="EC" id="2.7.11.11"/>
    </reaction>
</comment>
<comment type="catalytic activity">
    <reaction>
        <text>L-threonyl-[protein] + ATP = O-phospho-L-threonyl-[protein] + ADP + H(+)</text>
        <dbReference type="Rhea" id="RHEA:46608"/>
        <dbReference type="Rhea" id="RHEA-COMP:11060"/>
        <dbReference type="Rhea" id="RHEA-COMP:11605"/>
        <dbReference type="ChEBI" id="CHEBI:15378"/>
        <dbReference type="ChEBI" id="CHEBI:30013"/>
        <dbReference type="ChEBI" id="CHEBI:30616"/>
        <dbReference type="ChEBI" id="CHEBI:61977"/>
        <dbReference type="ChEBI" id="CHEBI:456216"/>
        <dbReference type="EC" id="2.7.11.11"/>
    </reaction>
</comment>
<comment type="activity regulation">
    <text>Allosterically activated by various compounds, including ATP. Activated by cAMP; the nucleotide acts as a dynamic and allosteric activator by coupling the two lobes of apo PKA, enhancing the enzyme dynamics synchronously and priming it for catalysis.</text>
</comment>
<comment type="subunit">
    <text evidence="3 4 11">A number of inactive tetrameric holoenzymes are produced by the combination of homo- or heterodimers of the different regulatory subunits associated with two catalytic subunits. cAMP causes the dissociation of the inactive holoenzyme into a dimer of regulatory subunits bound to four cAMP and two free monomeric catalytic subunits. The cAMP-dependent protein kinase catalytic subunit binds PJA2. Both isoforms 1 and 2 forms activate cAMP-sensitive PKAI and PKAII holoenzymes by interacting with regulatory subunit (R) of PKA, PRKAR1A/PKR1 and PRKAR2A/PKR2, respectively. Interacts with NFKB1, NFKB2 and NFKBIA in platelets; these interactions are disrupted by thrombin and collagen. Binds to ABL1 in spermatozoa and with CDC25B in oocytes (By similarity). Interacts with APOBEC3G and AICDA (By similarity). Interacts with RAB13; downstream effector of RAB13 involved in tight junction assembly. Found in a complex at least composed of MROH2B, PRKACA isoform 2 and TCP11 (By similarity). Interacts with MROH2B (By similarity). Interacts with HSF1 (By similarity). Isoform 2 interacts with TCP11 (By similarity). Interacts with TBC1D31; in the regulation of OFD1 (By similarity). Interacts in free form with SMO (via C-terminus); the interaction leads to sequestration of PRKACA at the membrane, preventing PRKACA-mediated phosphorylation of GLI transcription factors (By similarity).</text>
</comment>
<comment type="subcellular location">
    <subcellularLocation>
        <location evidence="4">Cytoplasm</location>
    </subcellularLocation>
    <subcellularLocation>
        <location evidence="4">Cell membrane</location>
    </subcellularLocation>
    <subcellularLocation>
        <location evidence="4">Membrane</location>
        <topology evidence="4">Lipid-anchor</topology>
    </subcellularLocation>
    <subcellularLocation>
        <location evidence="4">Nucleus</location>
    </subcellularLocation>
    <subcellularLocation>
        <location evidence="3">Mitochondrion</location>
    </subcellularLocation>
    <text evidence="3 4">Translocates into the nucleus (monomeric catalytic subunit). The inactive holoenzyme is found in the cytoplasm. Distributed throughout the cytoplasm in meiotically incompetent oocytes. Associated to mitochondrion as meiotic competence is acquired. Aggregates around the germinal vesicles (GV) at the immature GV stage oocytes (By similarity). Colocalizes with HSF1 in nuclear stress bodies (nSBs) upon heat shock (By similarity). Recruited to the cell membrane through interaction with SMO (By similarity).</text>
</comment>
<comment type="subcellular location">
    <molecule>Isoform 2</molecule>
    <subcellularLocation>
        <location evidence="3">Cell projection</location>
        <location evidence="3">Cilium</location>
        <location evidence="3">Flagellum</location>
    </subcellularLocation>
    <subcellularLocation>
        <location evidence="3">Cytoplasmic vesicle</location>
        <location evidence="3">Secretory vesicle</location>
        <location evidence="3">Acrosome</location>
    </subcellularLocation>
    <text evidence="1 3">Expressed in the midpiece region of the sperm flagellum. Expressed in the midpiece region of the sperm flagellum. Colocalizes with MROH2B and TCP11 on the acrosome and tail regions in round spermatids and spermatozoa regardless of the capacitation status of the sperm.</text>
</comment>
<comment type="alternative products">
    <event type="alternative splicing"/>
    <isoform>
        <id>P27791-1</id>
        <name>1</name>
        <name>C-alpha-1</name>
        <sequence type="displayed"/>
    </isoform>
    <isoform>
        <id>P27791-2</id>
        <name>2</name>
        <name>Cs</name>
        <sequence type="described" ref="VSP_013277"/>
    </isoform>
</comment>
<comment type="tissue specificity">
    <text evidence="8 9">Ubiquitously expressed. Isoform 2 is round spermatid specific.</text>
</comment>
<comment type="developmental stage">
    <text evidence="8">In spermatids, isoform 1 is expressed until spermatids become elutriated, whereafter isoform 2 is expressed.</text>
</comment>
<comment type="PTM">
    <text evidence="12">Asn-3 is deaminated to Asp in more than 25% of the proteins, giving rise to 2 major isoelectric variants, called CB and CA respectively (0.4 pH unit change). Deamidation proceeds via the so-called beta-aspartyl shift mechanism and yields either 'D-Asp-2' (major) or 'D-isoAsp-2' (minor), in addition to L-isomers. Deamidation occurs after the addition of myristate. The Asn-3 form reaches a significantly larger nuclear/cytoplasmic ratio than the 'Asp-2' form.</text>
</comment>
<comment type="PTM">
    <text evidence="3 4">Autophosphorylated. Phosphorylation is enhanced by vitamin K(2). Phosphorylated on threonine and serine residues. Phosphorylation on Thr-198 is required for full activity (By similarity). Phosphorylated at Tyr-331 by activated receptor tyrosine kinases EGFR and PDGFR; this increases catalytic efficiency (By similarity).</text>
</comment>
<comment type="PTM">
    <text evidence="3">When myristoylated, Ser-11 is autophosphorylated probably in conjunction with deamidation of Asn-3.</text>
</comment>
<comment type="similarity">
    <text evidence="14">Belongs to the protein kinase superfamily. AGC Ser/Thr protein kinase family. cAMP subfamily.</text>
</comment>
<dbReference type="EC" id="2.7.11.11"/>
<dbReference type="EMBL" id="X57986">
    <property type="protein sequence ID" value="CAA41052.1"/>
    <property type="molecule type" value="mRNA"/>
</dbReference>
<dbReference type="EMBL" id="AY375243">
    <property type="protein sequence ID" value="AAQ81631.1"/>
    <property type="molecule type" value="mRNA"/>
</dbReference>
<dbReference type="PIR" id="S16240">
    <property type="entry name" value="OKRT2C"/>
</dbReference>
<dbReference type="BMRB" id="P27791"/>
<dbReference type="SMR" id="P27791"/>
<dbReference type="CORUM" id="P27791"/>
<dbReference type="DIP" id="DIP-37312N"/>
<dbReference type="FunCoup" id="P27791">
    <property type="interactions" value="2412"/>
</dbReference>
<dbReference type="IntAct" id="P27791">
    <property type="interactions" value="5"/>
</dbReference>
<dbReference type="MINT" id="P27791"/>
<dbReference type="STRING" id="10116.ENSRNOP00000044732"/>
<dbReference type="BindingDB" id="P27791"/>
<dbReference type="ChEMBL" id="CHEMBL3390"/>
<dbReference type="GuidetoPHARMACOLOGY" id="1476"/>
<dbReference type="iPTMnet" id="P27791"/>
<dbReference type="PhosphoSitePlus" id="P27791"/>
<dbReference type="jPOST" id="P27791"/>
<dbReference type="PaxDb" id="10116-ENSRNOP00000044732"/>
<dbReference type="AGR" id="RGD:3389"/>
<dbReference type="RGD" id="3389">
    <property type="gene designation" value="Prkaca"/>
</dbReference>
<dbReference type="eggNOG" id="KOG0616">
    <property type="taxonomic scope" value="Eukaryota"/>
</dbReference>
<dbReference type="InParanoid" id="P27791"/>
<dbReference type="PhylomeDB" id="P27791"/>
<dbReference type="BRENDA" id="2.7.11.11">
    <property type="organism ID" value="5301"/>
</dbReference>
<dbReference type="Reactome" id="R-RNO-163615">
    <property type="pathway name" value="PKA activation"/>
</dbReference>
<dbReference type="Reactome" id="R-RNO-164378">
    <property type="pathway name" value="PKA activation in glucagon signalling"/>
</dbReference>
<dbReference type="Reactome" id="R-RNO-180024">
    <property type="pathway name" value="DARPP-32 events"/>
</dbReference>
<dbReference type="Reactome" id="R-RNO-2565942">
    <property type="pathway name" value="Regulation of PLK1 Activity at G2/M Transition"/>
</dbReference>
<dbReference type="Reactome" id="R-RNO-380259">
    <property type="pathway name" value="Loss of Nlp from mitotic centrosomes"/>
</dbReference>
<dbReference type="Reactome" id="R-RNO-380270">
    <property type="pathway name" value="Recruitment of mitotic centrosome proteins and complexes"/>
</dbReference>
<dbReference type="Reactome" id="R-RNO-380284">
    <property type="pathway name" value="Loss of proteins required for interphase microtubule organization from the centrosome"/>
</dbReference>
<dbReference type="Reactome" id="R-RNO-380320">
    <property type="pathway name" value="Recruitment of NuMA to mitotic centrosomes"/>
</dbReference>
<dbReference type="Reactome" id="R-RNO-381676">
    <property type="pathway name" value="Glucagon-like Peptide-1 (GLP1) regulates insulin secretion"/>
</dbReference>
<dbReference type="Reactome" id="R-RNO-392517">
    <property type="pathway name" value="Rap1 signalling"/>
</dbReference>
<dbReference type="Reactome" id="R-RNO-422356">
    <property type="pathway name" value="Regulation of insulin secretion"/>
</dbReference>
<dbReference type="Reactome" id="R-RNO-432040">
    <property type="pathway name" value="Vasopressin regulates renal water homeostasis via Aquaporins"/>
</dbReference>
<dbReference type="Reactome" id="R-RNO-4420097">
    <property type="pathway name" value="VEGFA-VEGFR2 Pathway"/>
</dbReference>
<dbReference type="Reactome" id="R-RNO-442720">
    <property type="pathway name" value="CREB1 phosphorylation through the activation of Adenylate Cyclase"/>
</dbReference>
<dbReference type="Reactome" id="R-RNO-512988">
    <property type="pathway name" value="Interleukin-3, Interleukin-5 and GM-CSF signaling"/>
</dbReference>
<dbReference type="Reactome" id="R-RNO-5578775">
    <property type="pathway name" value="Ion homeostasis"/>
</dbReference>
<dbReference type="Reactome" id="R-RNO-5610785">
    <property type="pathway name" value="GLI3 is processed to GLI3R by the proteasome"/>
</dbReference>
<dbReference type="Reactome" id="R-RNO-5610787">
    <property type="pathway name" value="Hedgehog 'off' state"/>
</dbReference>
<dbReference type="Reactome" id="R-RNO-5620912">
    <property type="pathway name" value="Anchoring of the basal body to the plasma membrane"/>
</dbReference>
<dbReference type="Reactome" id="R-RNO-5687128">
    <property type="pathway name" value="MAPK6/MAPK4 signaling"/>
</dbReference>
<dbReference type="Reactome" id="R-RNO-8853659">
    <property type="pathway name" value="RET signaling"/>
</dbReference>
<dbReference type="Reactome" id="R-RNO-8854518">
    <property type="pathway name" value="AURKA Activation by TPX2"/>
</dbReference>
<dbReference type="Reactome" id="R-RNO-8963896">
    <property type="pathway name" value="HDL assembly"/>
</dbReference>
<dbReference type="Reactome" id="R-RNO-9634597">
    <property type="pathway name" value="GPER1 signaling"/>
</dbReference>
<dbReference type="Reactome" id="R-RNO-983231">
    <property type="pathway name" value="Factors involved in megakaryocyte development and platelet production"/>
</dbReference>
<dbReference type="Reactome" id="R-RNO-9837999">
    <property type="pathway name" value="Mitochondrial protein degradation"/>
</dbReference>
<dbReference type="Reactome" id="R-RNO-9856530">
    <property type="pathway name" value="High laminar flow shear stress activates signaling by PIEZO1 and PECAM1:CDH5:KDR in endothelial cells"/>
</dbReference>
<dbReference type="EvolutionaryTrace" id="P27791"/>
<dbReference type="PRO" id="PR:P27791"/>
<dbReference type="Proteomes" id="UP000002494">
    <property type="component" value="Unplaced"/>
</dbReference>
<dbReference type="GO" id="GO:0001669">
    <property type="term" value="C:acrosomal vesicle"/>
    <property type="evidence" value="ECO:0000250"/>
    <property type="project" value="UniProtKB"/>
</dbReference>
<dbReference type="GO" id="GO:0005930">
    <property type="term" value="C:axoneme"/>
    <property type="evidence" value="ECO:0000266"/>
    <property type="project" value="RGD"/>
</dbReference>
<dbReference type="GO" id="GO:0005952">
    <property type="term" value="C:cAMP-dependent protein kinase complex"/>
    <property type="evidence" value="ECO:0000314"/>
    <property type="project" value="RGD"/>
</dbReference>
<dbReference type="GO" id="GO:0005813">
    <property type="term" value="C:centrosome"/>
    <property type="evidence" value="ECO:0000266"/>
    <property type="project" value="RGD"/>
</dbReference>
<dbReference type="GO" id="GO:0097546">
    <property type="term" value="C:ciliary base"/>
    <property type="evidence" value="ECO:0000266"/>
    <property type="project" value="RGD"/>
</dbReference>
<dbReference type="GO" id="GO:0005737">
    <property type="term" value="C:cytoplasm"/>
    <property type="evidence" value="ECO:0000266"/>
    <property type="project" value="RGD"/>
</dbReference>
<dbReference type="GO" id="GO:0005829">
    <property type="term" value="C:cytosol"/>
    <property type="evidence" value="ECO:0000266"/>
    <property type="project" value="RGD"/>
</dbReference>
<dbReference type="GO" id="GO:0042585">
    <property type="term" value="C:germinal vesicle"/>
    <property type="evidence" value="ECO:0000266"/>
    <property type="project" value="RGD"/>
</dbReference>
<dbReference type="GO" id="GO:0098978">
    <property type="term" value="C:glutamatergic synapse"/>
    <property type="evidence" value="ECO:0000266"/>
    <property type="project" value="RGD"/>
</dbReference>
<dbReference type="GO" id="GO:0005739">
    <property type="term" value="C:mitochondrion"/>
    <property type="evidence" value="ECO:0000266"/>
    <property type="project" value="RGD"/>
</dbReference>
<dbReference type="GO" id="GO:0031594">
    <property type="term" value="C:neuromuscular junction"/>
    <property type="evidence" value="ECO:0000314"/>
    <property type="project" value="SynGO"/>
</dbReference>
<dbReference type="GO" id="GO:0016607">
    <property type="term" value="C:nuclear speck"/>
    <property type="evidence" value="ECO:0000266"/>
    <property type="project" value="RGD"/>
</dbReference>
<dbReference type="GO" id="GO:0005654">
    <property type="term" value="C:nucleoplasm"/>
    <property type="evidence" value="ECO:0000304"/>
    <property type="project" value="Reactome"/>
</dbReference>
<dbReference type="GO" id="GO:0031588">
    <property type="term" value="C:nucleotide-activated protein kinase complex"/>
    <property type="evidence" value="ECO:0000266"/>
    <property type="project" value="RGD"/>
</dbReference>
<dbReference type="GO" id="GO:0005634">
    <property type="term" value="C:nucleus"/>
    <property type="evidence" value="ECO:0000266"/>
    <property type="project" value="RGD"/>
</dbReference>
<dbReference type="GO" id="GO:0048471">
    <property type="term" value="C:perinuclear region of cytoplasm"/>
    <property type="evidence" value="ECO:0000314"/>
    <property type="project" value="RGD"/>
</dbReference>
<dbReference type="GO" id="GO:0005886">
    <property type="term" value="C:plasma membrane"/>
    <property type="evidence" value="ECO:0000266"/>
    <property type="project" value="RGD"/>
</dbReference>
<dbReference type="GO" id="GO:0044853">
    <property type="term" value="C:plasma membrane raft"/>
    <property type="evidence" value="ECO:0000266"/>
    <property type="project" value="RGD"/>
</dbReference>
<dbReference type="GO" id="GO:0098794">
    <property type="term" value="C:postsynapse"/>
    <property type="evidence" value="ECO:0000314"/>
    <property type="project" value="SynGO"/>
</dbReference>
<dbReference type="GO" id="GO:0098793">
    <property type="term" value="C:presynapse"/>
    <property type="evidence" value="ECO:0000314"/>
    <property type="project" value="SynGO"/>
</dbReference>
<dbReference type="GO" id="GO:0032991">
    <property type="term" value="C:protein-containing complex"/>
    <property type="evidence" value="ECO:0000314"/>
    <property type="project" value="RGD"/>
</dbReference>
<dbReference type="GO" id="GO:0036126">
    <property type="term" value="C:sperm flagellum"/>
    <property type="evidence" value="ECO:0000250"/>
    <property type="project" value="UniProtKB"/>
</dbReference>
<dbReference type="GO" id="GO:0097225">
    <property type="term" value="C:sperm midpiece"/>
    <property type="evidence" value="ECO:0000250"/>
    <property type="project" value="UniProtKB"/>
</dbReference>
<dbReference type="GO" id="GO:0005524">
    <property type="term" value="F:ATP binding"/>
    <property type="evidence" value="ECO:0000266"/>
    <property type="project" value="RGD"/>
</dbReference>
<dbReference type="GO" id="GO:0004691">
    <property type="term" value="F:cAMP-dependent protein kinase activity"/>
    <property type="evidence" value="ECO:0000314"/>
    <property type="project" value="RGD"/>
</dbReference>
<dbReference type="GO" id="GO:0000287">
    <property type="term" value="F:magnesium ion binding"/>
    <property type="evidence" value="ECO:0000266"/>
    <property type="project" value="RGD"/>
</dbReference>
<dbReference type="GO" id="GO:0030145">
    <property type="term" value="F:manganese ion binding"/>
    <property type="evidence" value="ECO:0000266"/>
    <property type="project" value="RGD"/>
</dbReference>
<dbReference type="GO" id="GO:0019904">
    <property type="term" value="F:protein domain specific binding"/>
    <property type="evidence" value="ECO:0000266"/>
    <property type="project" value="RGD"/>
</dbReference>
<dbReference type="GO" id="GO:0034237">
    <property type="term" value="F:protein kinase A regulatory subunit binding"/>
    <property type="evidence" value="ECO:0000266"/>
    <property type="project" value="RGD"/>
</dbReference>
<dbReference type="GO" id="GO:0004672">
    <property type="term" value="F:protein kinase activity"/>
    <property type="evidence" value="ECO:0000266"/>
    <property type="project" value="RGD"/>
</dbReference>
<dbReference type="GO" id="GO:0019901">
    <property type="term" value="F:protein kinase binding"/>
    <property type="evidence" value="ECO:0000353"/>
    <property type="project" value="BHF-UCL"/>
</dbReference>
<dbReference type="GO" id="GO:0106310">
    <property type="term" value="F:protein serine kinase activity"/>
    <property type="evidence" value="ECO:0000266"/>
    <property type="project" value="RGD"/>
</dbReference>
<dbReference type="GO" id="GO:0004674">
    <property type="term" value="F:protein serine/threonine kinase activity"/>
    <property type="evidence" value="ECO:0000266"/>
    <property type="project" value="RGD"/>
</dbReference>
<dbReference type="GO" id="GO:0004712">
    <property type="term" value="F:protein serine/threonine/tyrosine kinase activity"/>
    <property type="evidence" value="ECO:0000266"/>
    <property type="project" value="RGD"/>
</dbReference>
<dbReference type="GO" id="GO:0044877">
    <property type="term" value="F:protein-containing complex binding"/>
    <property type="evidence" value="ECO:0000353"/>
    <property type="project" value="RGD"/>
</dbReference>
<dbReference type="GO" id="GO:0031267">
    <property type="term" value="F:small GTPase binding"/>
    <property type="evidence" value="ECO:0000353"/>
    <property type="project" value="UniProtKB"/>
</dbReference>
<dbReference type="GO" id="GO:0031625">
    <property type="term" value="F:ubiquitin protein ligase binding"/>
    <property type="evidence" value="ECO:0000266"/>
    <property type="project" value="RGD"/>
</dbReference>
<dbReference type="GO" id="GO:0007189">
    <property type="term" value="P:adenylate cyclase-activating G protein-coupled receptor signaling pathway"/>
    <property type="evidence" value="ECO:0000266"/>
    <property type="project" value="RGD"/>
</dbReference>
<dbReference type="GO" id="GO:0007193">
    <property type="term" value="P:adenylate cyclase-inhibiting G protein-coupled receptor signaling pathway"/>
    <property type="evidence" value="ECO:0000266"/>
    <property type="project" value="RGD"/>
</dbReference>
<dbReference type="GO" id="GO:0141156">
    <property type="term" value="P:cAMP/PKA signal transduction"/>
    <property type="evidence" value="ECO:0000266"/>
    <property type="project" value="RGD"/>
</dbReference>
<dbReference type="GO" id="GO:0070417">
    <property type="term" value="P:cellular response to cold"/>
    <property type="evidence" value="ECO:0000266"/>
    <property type="project" value="RGD"/>
</dbReference>
<dbReference type="GO" id="GO:0071377">
    <property type="term" value="P:cellular response to glucagon stimulus"/>
    <property type="evidence" value="ECO:0000266"/>
    <property type="project" value="RGD"/>
</dbReference>
<dbReference type="GO" id="GO:0071333">
    <property type="term" value="P:cellular response to glucose stimulus"/>
    <property type="evidence" value="ECO:0000266"/>
    <property type="project" value="RGD"/>
</dbReference>
<dbReference type="GO" id="GO:0034605">
    <property type="term" value="P:cellular response to heat"/>
    <property type="evidence" value="ECO:0000250"/>
    <property type="project" value="UniProtKB"/>
</dbReference>
<dbReference type="GO" id="GO:0071374">
    <property type="term" value="P:cellular response to parathyroid hormone stimulus"/>
    <property type="evidence" value="ECO:0000266"/>
    <property type="project" value="RGD"/>
</dbReference>
<dbReference type="GO" id="GO:0030007">
    <property type="term" value="P:intracellular potassium ion homeostasis"/>
    <property type="evidence" value="ECO:0000266"/>
    <property type="project" value="RGD"/>
</dbReference>
<dbReference type="GO" id="GO:0001707">
    <property type="term" value="P:mesoderm formation"/>
    <property type="evidence" value="ECO:0000266"/>
    <property type="project" value="RGD"/>
</dbReference>
<dbReference type="GO" id="GO:0050804">
    <property type="term" value="P:modulation of chemical synaptic transmission"/>
    <property type="evidence" value="ECO:0000266"/>
    <property type="project" value="RGD"/>
</dbReference>
<dbReference type="GO" id="GO:0006397">
    <property type="term" value="P:mRNA processing"/>
    <property type="evidence" value="ECO:0000266"/>
    <property type="project" value="RGD"/>
</dbReference>
<dbReference type="GO" id="GO:1904539">
    <property type="term" value="P:negative regulation of glycolytic process through fructose-6-phosphate"/>
    <property type="evidence" value="ECO:0000266"/>
    <property type="project" value="RGD"/>
</dbReference>
<dbReference type="GO" id="GO:0051447">
    <property type="term" value="P:negative regulation of meiotic cell cycle"/>
    <property type="evidence" value="ECO:0000314"/>
    <property type="project" value="RGD"/>
</dbReference>
<dbReference type="GO" id="GO:1904145">
    <property type="term" value="P:negative regulation of meiotic cell cycle process involved in oocyte maturation"/>
    <property type="evidence" value="ECO:0000266"/>
    <property type="project" value="RGD"/>
</dbReference>
<dbReference type="GO" id="GO:0045879">
    <property type="term" value="P:negative regulation of smoothened signaling pathway"/>
    <property type="evidence" value="ECO:0000266"/>
    <property type="project" value="RGD"/>
</dbReference>
<dbReference type="GO" id="GO:1904262">
    <property type="term" value="P:negative regulation of TORC1 signaling"/>
    <property type="evidence" value="ECO:0000250"/>
    <property type="project" value="UniProtKB"/>
</dbReference>
<dbReference type="GO" id="GO:0001843">
    <property type="term" value="P:neural tube closure"/>
    <property type="evidence" value="ECO:0000266"/>
    <property type="project" value="RGD"/>
</dbReference>
<dbReference type="GO" id="GO:0018105">
    <property type="term" value="P:peptidyl-serine phosphorylation"/>
    <property type="evidence" value="ECO:0000315"/>
    <property type="project" value="UniProtKB"/>
</dbReference>
<dbReference type="GO" id="GO:0008284">
    <property type="term" value="P:positive regulation of cell population proliferation"/>
    <property type="evidence" value="ECO:0000315"/>
    <property type="project" value="RGD"/>
</dbReference>
<dbReference type="GO" id="GO:0045542">
    <property type="term" value="P:positive regulation of cholesterol biosynthetic process"/>
    <property type="evidence" value="ECO:0000266"/>
    <property type="project" value="RGD"/>
</dbReference>
<dbReference type="GO" id="GO:0045722">
    <property type="term" value="P:positive regulation of gluconeogenesis"/>
    <property type="evidence" value="ECO:0000266"/>
    <property type="project" value="RGD"/>
</dbReference>
<dbReference type="GO" id="GO:0032024">
    <property type="term" value="P:positive regulation of insulin secretion"/>
    <property type="evidence" value="ECO:0000266"/>
    <property type="project" value="RGD"/>
</dbReference>
<dbReference type="GO" id="GO:0050766">
    <property type="term" value="P:positive regulation of phagocytosis"/>
    <property type="evidence" value="ECO:0000266"/>
    <property type="project" value="RGD"/>
</dbReference>
<dbReference type="GO" id="GO:0046827">
    <property type="term" value="P:positive regulation of protein export from nucleus"/>
    <property type="evidence" value="ECO:0000266"/>
    <property type="project" value="RGD"/>
</dbReference>
<dbReference type="GO" id="GO:0099170">
    <property type="term" value="P:postsynaptic modulation of chemical synaptic transmission"/>
    <property type="evidence" value="ECO:0000266"/>
    <property type="project" value="RGD"/>
</dbReference>
<dbReference type="GO" id="GO:0006611">
    <property type="term" value="P:protein export from nucleus"/>
    <property type="evidence" value="ECO:0000266"/>
    <property type="project" value="RGD"/>
</dbReference>
<dbReference type="GO" id="GO:1990044">
    <property type="term" value="P:protein localization to lipid droplet"/>
    <property type="evidence" value="ECO:0000266"/>
    <property type="project" value="RGD"/>
</dbReference>
<dbReference type="GO" id="GO:2000810">
    <property type="term" value="P:regulation of bicellular tight junction assembly"/>
    <property type="evidence" value="ECO:0000266"/>
    <property type="project" value="RGD"/>
</dbReference>
<dbReference type="GO" id="GO:0051726">
    <property type="term" value="P:regulation of cell cycle"/>
    <property type="evidence" value="ECO:0000266"/>
    <property type="project" value="RGD"/>
</dbReference>
<dbReference type="GO" id="GO:0043457">
    <property type="term" value="P:regulation of cellular respiration"/>
    <property type="evidence" value="ECO:0000314"/>
    <property type="project" value="RGD"/>
</dbReference>
<dbReference type="GO" id="GO:0045667">
    <property type="term" value="P:regulation of osteoblast differentiation"/>
    <property type="evidence" value="ECO:0000266"/>
    <property type="project" value="RGD"/>
</dbReference>
<dbReference type="GO" id="GO:0061136">
    <property type="term" value="P:regulation of proteasomal protein catabolic process"/>
    <property type="evidence" value="ECO:0000266"/>
    <property type="project" value="RGD"/>
</dbReference>
<dbReference type="GO" id="GO:0070613">
    <property type="term" value="P:regulation of protein processing"/>
    <property type="evidence" value="ECO:0000266"/>
    <property type="project" value="RGD"/>
</dbReference>
<dbReference type="GO" id="GO:0051966">
    <property type="term" value="P:regulation of synaptic transmission, glutamatergic"/>
    <property type="evidence" value="ECO:0000314"/>
    <property type="project" value="RGD"/>
</dbReference>
<dbReference type="GO" id="GO:0007165">
    <property type="term" value="P:signal transduction"/>
    <property type="evidence" value="ECO:0000318"/>
    <property type="project" value="GO_Central"/>
</dbReference>
<dbReference type="GO" id="GO:0048240">
    <property type="term" value="P:sperm capacitation"/>
    <property type="evidence" value="ECO:0000266"/>
    <property type="project" value="RGD"/>
</dbReference>
<dbReference type="GO" id="GO:0048792">
    <property type="term" value="P:spontaneous exocytosis of neurotransmitter"/>
    <property type="evidence" value="ECO:0000315"/>
    <property type="project" value="UniProtKB"/>
</dbReference>
<dbReference type="CDD" id="cd14209">
    <property type="entry name" value="STKc_PKA"/>
    <property type="match status" value="1"/>
</dbReference>
<dbReference type="FunFam" id="3.30.200.20:FF:000005">
    <property type="entry name" value="cAMP-dependent protein kinase catalytic subunit"/>
    <property type="match status" value="1"/>
</dbReference>
<dbReference type="FunFam" id="1.10.510.10:FF:000005">
    <property type="entry name" value="cAMP-dependent protein kinase catalytic subunit alpha"/>
    <property type="match status" value="1"/>
</dbReference>
<dbReference type="Gene3D" id="3.30.200.20">
    <property type="entry name" value="Phosphorylase Kinase, domain 1"/>
    <property type="match status" value="1"/>
</dbReference>
<dbReference type="Gene3D" id="1.10.510.10">
    <property type="entry name" value="Transferase(Phosphotransferase) domain 1"/>
    <property type="match status" value="1"/>
</dbReference>
<dbReference type="InterPro" id="IPR000961">
    <property type="entry name" value="AGC-kinase_C"/>
</dbReference>
<dbReference type="InterPro" id="IPR011009">
    <property type="entry name" value="Kinase-like_dom_sf"/>
</dbReference>
<dbReference type="InterPro" id="IPR000719">
    <property type="entry name" value="Prot_kinase_dom"/>
</dbReference>
<dbReference type="InterPro" id="IPR017441">
    <property type="entry name" value="Protein_kinase_ATP_BS"/>
</dbReference>
<dbReference type="InterPro" id="IPR008271">
    <property type="entry name" value="Ser/Thr_kinase_AS"/>
</dbReference>
<dbReference type="InterPro" id="IPR044109">
    <property type="entry name" value="STKc_PKA"/>
</dbReference>
<dbReference type="PANTHER" id="PTHR24353:SF82">
    <property type="entry name" value="CAMP-DEPENDENT PROTEIN KINASE CATALYTIC SUBUNIT ALPHA"/>
    <property type="match status" value="1"/>
</dbReference>
<dbReference type="PANTHER" id="PTHR24353">
    <property type="entry name" value="CYCLIC NUCLEOTIDE-DEPENDENT PROTEIN KINASE"/>
    <property type="match status" value="1"/>
</dbReference>
<dbReference type="Pfam" id="PF00069">
    <property type="entry name" value="Pkinase"/>
    <property type="match status" value="1"/>
</dbReference>
<dbReference type="SMART" id="SM00133">
    <property type="entry name" value="S_TK_X"/>
    <property type="match status" value="1"/>
</dbReference>
<dbReference type="SMART" id="SM00220">
    <property type="entry name" value="S_TKc"/>
    <property type="match status" value="1"/>
</dbReference>
<dbReference type="SUPFAM" id="SSF56112">
    <property type="entry name" value="Protein kinase-like (PK-like)"/>
    <property type="match status" value="1"/>
</dbReference>
<dbReference type="PROSITE" id="PS51285">
    <property type="entry name" value="AGC_KINASE_CTER"/>
    <property type="match status" value="1"/>
</dbReference>
<dbReference type="PROSITE" id="PS00107">
    <property type="entry name" value="PROTEIN_KINASE_ATP"/>
    <property type="match status" value="1"/>
</dbReference>
<dbReference type="PROSITE" id="PS50011">
    <property type="entry name" value="PROTEIN_KINASE_DOM"/>
    <property type="match status" value="1"/>
</dbReference>
<dbReference type="PROSITE" id="PS00108">
    <property type="entry name" value="PROTEIN_KINASE_ST"/>
    <property type="match status" value="1"/>
</dbReference>
<accession>P27791</accession>
<accession>Q6UA68</accession>
<name>KAPCA_RAT</name>
<evidence type="ECO:0000250" key="1"/>
<evidence type="ECO:0000250" key="2">
    <source>
        <dbReference type="UniProtKB" id="P00517"/>
    </source>
</evidence>
<evidence type="ECO:0000250" key="3">
    <source>
        <dbReference type="UniProtKB" id="P05132"/>
    </source>
</evidence>
<evidence type="ECO:0000250" key="4">
    <source>
        <dbReference type="UniProtKB" id="P17612"/>
    </source>
</evidence>
<evidence type="ECO:0000255" key="5">
    <source>
        <dbReference type="PROSITE-ProRule" id="PRU00159"/>
    </source>
</evidence>
<evidence type="ECO:0000255" key="6">
    <source>
        <dbReference type="PROSITE-ProRule" id="PRU00618"/>
    </source>
</evidence>
<evidence type="ECO:0000255" key="7">
    <source>
        <dbReference type="PROSITE-ProRule" id="PRU10027"/>
    </source>
</evidence>
<evidence type="ECO:0000269" key="8">
    <source>
    </source>
</evidence>
<evidence type="ECO:0000269" key="9">
    <source>
    </source>
</evidence>
<evidence type="ECO:0000269" key="10">
    <source>
    </source>
</evidence>
<evidence type="ECO:0000269" key="11">
    <source>
    </source>
</evidence>
<evidence type="ECO:0000269" key="12">
    <source>
    </source>
</evidence>
<evidence type="ECO:0000303" key="13">
    <source>
    </source>
</evidence>
<evidence type="ECO:0000305" key="14"/>
<evidence type="ECO:0007744" key="15">
    <source>
    </source>
</evidence>
<feature type="initiator methionine" description="Removed" evidence="12">
    <location>
        <position position="1"/>
    </location>
</feature>
<feature type="chain" id="PRO_0000086055" description="cAMP-dependent protein kinase catalytic subunit alpha">
    <location>
        <begin position="2"/>
        <end position="351"/>
    </location>
</feature>
<feature type="domain" description="Protein kinase" evidence="5">
    <location>
        <begin position="44"/>
        <end position="298"/>
    </location>
</feature>
<feature type="domain" description="AGC-kinase C-terminal" evidence="6">
    <location>
        <begin position="299"/>
        <end position="351"/>
    </location>
</feature>
<feature type="active site" description="Proton acceptor" evidence="5 7">
    <location>
        <position position="167"/>
    </location>
</feature>
<feature type="binding site" evidence="5">
    <location>
        <begin position="50"/>
        <end position="58"/>
    </location>
    <ligand>
        <name>ATP</name>
        <dbReference type="ChEBI" id="CHEBI:30616"/>
    </ligand>
</feature>
<feature type="binding site" evidence="5">
    <location>
        <position position="73"/>
    </location>
    <ligand>
        <name>ATP</name>
        <dbReference type="ChEBI" id="CHEBI:30616"/>
    </ligand>
</feature>
<feature type="binding site" evidence="5">
    <location>
        <begin position="122"/>
        <end position="128"/>
    </location>
    <ligand>
        <name>ATP</name>
        <dbReference type="ChEBI" id="CHEBI:30616"/>
    </ligand>
</feature>
<feature type="binding site" evidence="5">
    <location>
        <begin position="169"/>
        <end position="172"/>
    </location>
    <ligand>
        <name>ATP</name>
        <dbReference type="ChEBI" id="CHEBI:30616"/>
    </ligand>
</feature>
<feature type="modified residue" description="Deamidated asparagine; partial" evidence="12">
    <location>
        <position position="3"/>
    </location>
</feature>
<feature type="modified residue" description="Phosphoserine; by autocatalysis" evidence="3">
    <location>
        <position position="11"/>
    </location>
</feature>
<feature type="modified residue" description="Phosphothreonine" evidence="4">
    <location>
        <position position="49"/>
    </location>
</feature>
<feature type="modified residue" description="Phosphoserine" evidence="3">
    <location>
        <position position="140"/>
    </location>
</feature>
<feature type="modified residue" description="Phosphothreonine" evidence="4">
    <location>
        <position position="196"/>
    </location>
</feature>
<feature type="modified residue" description="Phosphothreonine; by PDPK1" evidence="2">
    <location>
        <position position="198"/>
    </location>
</feature>
<feature type="modified residue" description="Phosphotyrosine" evidence="3">
    <location>
        <position position="331"/>
    </location>
</feature>
<feature type="modified residue" description="Phosphoserine" evidence="15">
    <location>
        <position position="339"/>
    </location>
</feature>
<feature type="lipid moiety-binding region" description="N-myristoyl glycine" evidence="12">
    <location>
        <position position="2"/>
    </location>
</feature>
<feature type="splice variant" id="VSP_013277" description="In isoform 2." evidence="13">
    <original>MGNAAAAKKGSEQES</original>
    <variation>MASNSND</variation>
    <location>
        <begin position="1"/>
        <end position="15"/>
    </location>
</feature>
<protein>
    <recommendedName>
        <fullName>cAMP-dependent protein kinase catalytic subunit alpha</fullName>
        <shortName>PKA C-alpha</shortName>
        <ecNumber>2.7.11.11</ecNumber>
    </recommendedName>
</protein>
<gene>
    <name type="primary">Prkaca</name>
</gene>
<proteinExistence type="evidence at protein level"/>
<reference key="1">
    <citation type="journal article" date="1991" name="Biochim. Biophys. Acta">
        <title>Rat C alpha catalytic subunit of the cAMP-dependent protein kinase: cDNA sequence and evidence that it is the only isoform expressed in myoblasts.</title>
        <authorList>
            <person name="Wiemann S."/>
            <person name="Voss H."/>
            <person name="Kinzel V."/>
            <person name="Pyerin W."/>
        </authorList>
    </citation>
    <scope>NUCLEOTIDE SEQUENCE [MRNA] (ISOFORM 1)</scope>
    <scope>TISSUE SPECIFICITY</scope>
</reference>
<reference key="2">
    <citation type="journal article" date="1998" name="Protein Sci.">
        <title>A conserved deamidation site at Asn 2 in the catalytic subunit of mammalian cAMP-dependent protein kinase detected by capillary LC-MS and tandem mass spectrometry.</title>
        <authorList>
            <person name="Jedrzejewski P.T."/>
            <person name="Girod A."/>
            <person name="Tholey A."/>
            <person name="Koenig N."/>
            <person name="Thullner S."/>
            <person name="Kinzel V."/>
            <person name="Bossemeyer D."/>
        </authorList>
    </citation>
    <scope>PROTEIN SEQUENCE OF 2-8 (ISOFORM 1)</scope>
    <scope>MYRISTOYLATION AT GLY-2</scope>
    <scope>DEAMIDATION AT ASN-3</scope>
</reference>
<reference key="3">
    <citation type="journal article" date="2003" name="J. Biol. Chem.">
        <title>Phosphorylation of rat spermatidal protein TP2 by sperm-specific protein kinase A and modulation of its transport into the haploid nucleus.</title>
        <authorList>
            <person name="Ullas K.S."/>
            <person name="Rao M.R.S."/>
        </authorList>
    </citation>
    <scope>NUCLEOTIDE SEQUENCE [MRNA] OF 1-313 (ISOFORM 2)</scope>
    <scope>TISSUE SPECIFICITY</scope>
    <scope>DEVELOPMENTAL STAGE</scope>
    <source>
        <strain>Wistar</strain>
    </source>
</reference>
<reference key="4">
    <citation type="journal article" date="2010" name="J. Neurosci.">
        <title>Protein kinase A in the pedunculopontine tegmental nucleus of rat contributes to regulation of rapid eye movement sleep.</title>
        <authorList>
            <person name="Datta S."/>
            <person name="Desarnaud F."/>
        </authorList>
    </citation>
    <scope>FUNCTION IN RAPID EYE MOVEMENT SLEEP</scope>
</reference>
<reference key="5">
    <citation type="journal article" date="2012" name="Nat. Commun.">
        <title>Quantitative maps of protein phosphorylation sites across 14 different rat organs and tissues.</title>
        <authorList>
            <person name="Lundby A."/>
            <person name="Secher A."/>
            <person name="Lage K."/>
            <person name="Nordsborg N.B."/>
            <person name="Dmytriyev A."/>
            <person name="Lundby C."/>
            <person name="Olsen J.V."/>
        </authorList>
    </citation>
    <scope>PHOSPHORYLATION [LARGE SCALE ANALYSIS] AT SER-339</scope>
    <scope>IDENTIFICATION BY MASS SPECTROMETRY [LARGE SCALE ANALYSIS]</scope>
</reference>
<reference key="6">
    <citation type="journal article" date="2013" name="J. Mol. Endocrinol.">
        <title>RAB13 regulates Sertoli cell permeability barrier dynamics through protein kinase A.</title>
        <authorList>
            <person name="Su W."/>
            <person name="Liu X."/>
        </authorList>
    </citation>
    <scope>INTERACTION WITH RAB13</scope>
</reference>
<keyword id="KW-0025">Alternative splicing</keyword>
<keyword id="KW-0067">ATP-binding</keyword>
<keyword id="KW-0114">cAMP</keyword>
<keyword id="KW-1003">Cell membrane</keyword>
<keyword id="KW-0966">Cell projection</keyword>
<keyword id="KW-0969">Cilium</keyword>
<keyword id="KW-0963">Cytoplasm</keyword>
<keyword id="KW-0968">Cytoplasmic vesicle</keyword>
<keyword id="KW-0903">Direct protein sequencing</keyword>
<keyword id="KW-0282">Flagellum</keyword>
<keyword id="KW-0418">Kinase</keyword>
<keyword id="KW-0449">Lipoprotein</keyword>
<keyword id="KW-0472">Membrane</keyword>
<keyword id="KW-0496">Mitochondrion</keyword>
<keyword id="KW-0519">Myristate</keyword>
<keyword id="KW-0547">Nucleotide-binding</keyword>
<keyword id="KW-0539">Nucleus</keyword>
<keyword id="KW-0597">Phosphoprotein</keyword>
<keyword id="KW-1185">Reference proteome</keyword>
<keyword id="KW-0723">Serine/threonine-protein kinase</keyword>
<keyword id="KW-0808">Transferase</keyword>
<sequence length="351" mass="40620">MGNAAAAKKGSEQESVKEFLAKAKEDFLKKWEDPSQNTAQLDHFDRIKTLGTGSFGRVMLVKHKESGNHYAMKILDKQKVVKLKQIEHTLNEKRILQAVNFPFLVKLEFSFKDNSNLYMVMEYVPGGEMFSHLRRIGRFSEPHARFYAAQIVLTFEYLHSLDLIYRDLKPENLLIDQQGYIQVTDFGFAKRVKGRTWTLCGTPEYLAPEIILSKGYNKAVDWWALGVLIYEMAAGYPPFFADQPIQIYEKIVSGKVRFPSHFSSDLKDLLRNLLQVDLTKRFGNLKNGVNDIKNHKWFATTDWIAIYQRKVEAPFIPKFKGPGDTSNFDDYEEEEIRVSINEKCGKEFTEF</sequence>
<organism>
    <name type="scientific">Rattus norvegicus</name>
    <name type="common">Rat</name>
    <dbReference type="NCBI Taxonomy" id="10116"/>
    <lineage>
        <taxon>Eukaryota</taxon>
        <taxon>Metazoa</taxon>
        <taxon>Chordata</taxon>
        <taxon>Craniata</taxon>
        <taxon>Vertebrata</taxon>
        <taxon>Euteleostomi</taxon>
        <taxon>Mammalia</taxon>
        <taxon>Eutheria</taxon>
        <taxon>Euarchontoglires</taxon>
        <taxon>Glires</taxon>
        <taxon>Rodentia</taxon>
        <taxon>Myomorpha</taxon>
        <taxon>Muroidea</taxon>
        <taxon>Muridae</taxon>
        <taxon>Murinae</taxon>
        <taxon>Rattus</taxon>
    </lineage>
</organism>